<feature type="signal peptide" evidence="1">
    <location>
        <begin position="1"/>
        <end position="20"/>
    </location>
</feature>
<feature type="chain" id="PRO_0000035757" description="Transthyretin">
    <location>
        <begin position="21"/>
        <end position="147"/>
    </location>
</feature>
<feature type="binding site" evidence="2">
    <location>
        <position position="35"/>
    </location>
    <ligand>
        <name>L-thyroxine</name>
        <dbReference type="ChEBI" id="CHEBI:58448"/>
    </ligand>
</feature>
<feature type="binding site" evidence="2">
    <location>
        <position position="74"/>
    </location>
    <ligand>
        <name>L-thyroxine</name>
        <dbReference type="ChEBI" id="CHEBI:58448"/>
    </ligand>
</feature>
<feature type="binding site" evidence="2">
    <location>
        <position position="137"/>
    </location>
    <ligand>
        <name>L-thyroxine</name>
        <dbReference type="ChEBI" id="CHEBI:58448"/>
    </ligand>
</feature>
<feature type="modified residue" description="Sulfocysteine" evidence="2">
    <location>
        <position position="30"/>
    </location>
</feature>
<feature type="modified residue" description="Phosphoserine" evidence="3">
    <location>
        <position position="72"/>
    </location>
</feature>
<feature type="glycosylation site" description="N-linked (GlcNAc...) asparagine" evidence="4">
    <location>
        <position position="118"/>
    </location>
</feature>
<feature type="sequence conflict" description="In Ref. 1; BAC20609." evidence="5" ref="1">
    <original>A</original>
    <variation>R</variation>
    <location>
        <position position="129"/>
    </location>
</feature>
<organism>
    <name type="scientific">Macaca fascicularis</name>
    <name type="common">Crab-eating macaque</name>
    <name type="synonym">Cynomolgus monkey</name>
    <dbReference type="NCBI Taxonomy" id="9541"/>
    <lineage>
        <taxon>Eukaryota</taxon>
        <taxon>Metazoa</taxon>
        <taxon>Chordata</taxon>
        <taxon>Craniata</taxon>
        <taxon>Vertebrata</taxon>
        <taxon>Euteleostomi</taxon>
        <taxon>Mammalia</taxon>
        <taxon>Eutheria</taxon>
        <taxon>Euarchontoglires</taxon>
        <taxon>Primates</taxon>
        <taxon>Haplorrhini</taxon>
        <taxon>Catarrhini</taxon>
        <taxon>Cercopithecidae</taxon>
        <taxon>Cercopithecinae</taxon>
        <taxon>Macaca</taxon>
    </lineage>
</organism>
<protein>
    <recommendedName>
        <fullName>Transthyretin</fullName>
    </recommendedName>
    <alternativeName>
        <fullName>Prealbumin</fullName>
    </alternativeName>
</protein>
<evidence type="ECO:0000250" key="1"/>
<evidence type="ECO:0000250" key="2">
    <source>
        <dbReference type="UniProtKB" id="P02766"/>
    </source>
</evidence>
<evidence type="ECO:0000250" key="3">
    <source>
        <dbReference type="UniProtKB" id="P02767"/>
    </source>
</evidence>
<evidence type="ECO:0000255" key="4"/>
<evidence type="ECO:0000305" key="5"/>
<keyword id="KW-0325">Glycoprotein</keyword>
<keyword id="KW-0372">Hormone</keyword>
<keyword id="KW-0597">Phosphoprotein</keyword>
<keyword id="KW-1185">Reference proteome</keyword>
<keyword id="KW-0964">Secreted</keyword>
<keyword id="KW-0732">Signal</keyword>
<keyword id="KW-0765">Sulfation</keyword>
<keyword id="KW-0795">Thyroid hormone</keyword>
<keyword id="KW-0813">Transport</keyword>
<accession>Q8HXW1</accession>
<accession>Q4R5L4</accession>
<gene>
    <name type="primary">TTR</name>
    <name type="ORF">QccE-10711</name>
    <name type="ORF">QccE-14396</name>
</gene>
<name>TTHY_MACFA</name>
<dbReference type="EMBL" id="AB083330">
    <property type="protein sequence ID" value="BAC20609.1"/>
    <property type="molecule type" value="mRNA"/>
</dbReference>
<dbReference type="EMBL" id="AB169529">
    <property type="protein sequence ID" value="BAE01611.1"/>
    <property type="molecule type" value="mRNA"/>
</dbReference>
<dbReference type="RefSeq" id="NP_001270522.1">
    <property type="nucleotide sequence ID" value="NM_001283593.1"/>
</dbReference>
<dbReference type="SMR" id="Q8HXW1"/>
<dbReference type="STRING" id="9541.ENSMFAP00000006489"/>
<dbReference type="GlyCosmos" id="Q8HXW1">
    <property type="glycosylation" value="1 site, No reported glycans"/>
</dbReference>
<dbReference type="VEuPathDB" id="HostDB:ENSMFAG00000039111"/>
<dbReference type="eggNOG" id="KOG3006">
    <property type="taxonomic scope" value="Eukaryota"/>
</dbReference>
<dbReference type="OMA" id="AMYKVEL"/>
<dbReference type="Proteomes" id="UP000233100">
    <property type="component" value="Chromosome 18"/>
</dbReference>
<dbReference type="GO" id="GO:0005615">
    <property type="term" value="C:extracellular space"/>
    <property type="evidence" value="ECO:0007669"/>
    <property type="project" value="TreeGrafter"/>
</dbReference>
<dbReference type="GO" id="GO:0005179">
    <property type="term" value="F:hormone activity"/>
    <property type="evidence" value="ECO:0007669"/>
    <property type="project" value="UniProtKB-KW"/>
</dbReference>
<dbReference type="GO" id="GO:0070324">
    <property type="term" value="F:thyroid hormone binding"/>
    <property type="evidence" value="ECO:0007669"/>
    <property type="project" value="TreeGrafter"/>
</dbReference>
<dbReference type="GO" id="GO:0006144">
    <property type="term" value="P:purine nucleobase metabolic process"/>
    <property type="evidence" value="ECO:0007669"/>
    <property type="project" value="TreeGrafter"/>
</dbReference>
<dbReference type="CDD" id="cd05821">
    <property type="entry name" value="TLP_Transthyretin"/>
    <property type="match status" value="1"/>
</dbReference>
<dbReference type="FunFam" id="2.60.40.180:FF:000002">
    <property type="entry name" value="Transthyretin"/>
    <property type="match status" value="1"/>
</dbReference>
<dbReference type="Gene3D" id="2.60.40.180">
    <property type="entry name" value="Transthyretin/hydroxyisourate hydrolase domain"/>
    <property type="match status" value="1"/>
</dbReference>
<dbReference type="InterPro" id="IPR023418">
    <property type="entry name" value="Thyroxine_BS"/>
</dbReference>
<dbReference type="InterPro" id="IPR000895">
    <property type="entry name" value="Transthyretin/HIU_hydrolase"/>
</dbReference>
<dbReference type="InterPro" id="IPR023416">
    <property type="entry name" value="Transthyretin/HIU_hydrolase_d"/>
</dbReference>
<dbReference type="InterPro" id="IPR036817">
    <property type="entry name" value="Transthyretin/HIU_hydrolase_sf"/>
</dbReference>
<dbReference type="InterPro" id="IPR023419">
    <property type="entry name" value="Transthyretin_CS"/>
</dbReference>
<dbReference type="PANTHER" id="PTHR10395:SF12">
    <property type="entry name" value="TRANSTHYRETIN"/>
    <property type="match status" value="1"/>
</dbReference>
<dbReference type="PANTHER" id="PTHR10395">
    <property type="entry name" value="URICASE AND TRANSTHYRETIN-RELATED"/>
    <property type="match status" value="1"/>
</dbReference>
<dbReference type="Pfam" id="PF00576">
    <property type="entry name" value="Transthyretin"/>
    <property type="match status" value="1"/>
</dbReference>
<dbReference type="PRINTS" id="PR00189">
    <property type="entry name" value="TRNSTHYRETIN"/>
</dbReference>
<dbReference type="SMART" id="SM00095">
    <property type="entry name" value="TR_THY"/>
    <property type="match status" value="1"/>
</dbReference>
<dbReference type="SUPFAM" id="SSF49472">
    <property type="entry name" value="Transthyretin (synonym: prealbumin)"/>
    <property type="match status" value="1"/>
</dbReference>
<dbReference type="PROSITE" id="PS00768">
    <property type="entry name" value="TRANSTHYRETIN_1"/>
    <property type="match status" value="1"/>
</dbReference>
<dbReference type="PROSITE" id="PS00769">
    <property type="entry name" value="TRANSTHYRETIN_2"/>
    <property type="match status" value="1"/>
</dbReference>
<reference key="1">
    <citation type="submission" date="2002-04" db="EMBL/GenBank/DDBJ databases">
        <title>Isolation and characterization of cDNA for macaque neurological disease genes.</title>
        <authorList>
            <person name="Kusuda J."/>
            <person name="Osada N."/>
            <person name="Hida M."/>
            <person name="Sugano S."/>
            <person name="Hashimoto K."/>
        </authorList>
    </citation>
    <scope>NUCLEOTIDE SEQUENCE [LARGE SCALE MRNA]</scope>
    <source>
        <tissue>Brain cortex</tissue>
    </source>
</reference>
<reference key="2">
    <citation type="submission" date="2005-06" db="EMBL/GenBank/DDBJ databases">
        <title>DNA sequences of macaque genes expressed in brain or testis and its evolutionary implications.</title>
        <authorList>
            <consortium name="International consortium for macaque cDNA sequencing and analysis"/>
        </authorList>
    </citation>
    <scope>NUCLEOTIDE SEQUENCE [LARGE SCALE MRNA]</scope>
    <source>
        <tissue>Brain cortex</tissue>
    </source>
</reference>
<comment type="function">
    <text evidence="1">Thyroid hormone-binding protein. Probably transports thyroxine from the bloodstream to the brain (By similarity).</text>
</comment>
<comment type="subunit">
    <text evidence="1">Homotetramer. Dimer of dimers. In the homotetramer, subunits assemble around a central channel that can accommodate two ligand molecules. Interacts with RBP4 (By similarity).</text>
</comment>
<comment type="subcellular location">
    <subcellularLocation>
        <location evidence="1">Secreted</location>
    </subcellularLocation>
</comment>
<comment type="PTM">
    <text evidence="2">Sulfonation of the reactive cysteine Cys-30 enhances the stability of the native conformation of TTR, avoiding misassembly of the protein leading to amyloid formation.</text>
</comment>
<comment type="similarity">
    <text evidence="5">Belongs to the transthyretin family.</text>
</comment>
<sequence>MASHRLLLLCLAGLVFVSEAGPTGVDESKCPLMVKVLDAVRGSPAVNVAVNVFKKAADETWAPFASGKTSESGELHGLTTEEEFVEGIYKVEIDTKSYWKSLGISPFHEHAEVVFTANDSGPRHYTIAALLSPYSYSTTAVVTNPKE</sequence>
<proteinExistence type="evidence at transcript level"/>